<gene>
    <name evidence="8" type="primary">LPMO9A</name>
    <name type="ORF">THITE_2116536</name>
</gene>
<dbReference type="EC" id="1.14.99.56" evidence="7"/>
<dbReference type="EMBL" id="CP003011">
    <property type="protein sequence ID" value="AEO67662.1"/>
    <property type="molecule type" value="Genomic_DNA"/>
</dbReference>
<dbReference type="RefSeq" id="XP_003653998.1">
    <property type="nucleotide sequence ID" value="XM_003653950.1"/>
</dbReference>
<dbReference type="SMR" id="G2R6N0"/>
<dbReference type="STRING" id="578455.G2R6N0"/>
<dbReference type="GeneID" id="11516502"/>
<dbReference type="KEGG" id="ttt:THITE_2116536"/>
<dbReference type="eggNOG" id="ENOG502RYSN">
    <property type="taxonomic scope" value="Eukaryota"/>
</dbReference>
<dbReference type="HOGENOM" id="CLU_031730_4_2_1"/>
<dbReference type="OrthoDB" id="4849160at2759"/>
<dbReference type="Proteomes" id="UP000008181">
    <property type="component" value="Chromosome 3"/>
</dbReference>
<dbReference type="GO" id="GO:0005576">
    <property type="term" value="C:extracellular region"/>
    <property type="evidence" value="ECO:0007669"/>
    <property type="project" value="UniProtKB-SubCell"/>
</dbReference>
<dbReference type="GO" id="GO:0046872">
    <property type="term" value="F:metal ion binding"/>
    <property type="evidence" value="ECO:0007669"/>
    <property type="project" value="UniProtKB-KW"/>
</dbReference>
<dbReference type="GO" id="GO:0004497">
    <property type="term" value="F:monooxygenase activity"/>
    <property type="evidence" value="ECO:0007669"/>
    <property type="project" value="UniProtKB-KW"/>
</dbReference>
<dbReference type="GO" id="GO:0030245">
    <property type="term" value="P:cellulose catabolic process"/>
    <property type="evidence" value="ECO:0007669"/>
    <property type="project" value="UniProtKB-KW"/>
</dbReference>
<dbReference type="CDD" id="cd21175">
    <property type="entry name" value="LPMO_AA9"/>
    <property type="match status" value="1"/>
</dbReference>
<dbReference type="Gene3D" id="2.70.50.70">
    <property type="match status" value="1"/>
</dbReference>
<dbReference type="InterPro" id="IPR049892">
    <property type="entry name" value="AA9"/>
</dbReference>
<dbReference type="InterPro" id="IPR005103">
    <property type="entry name" value="AA9_LPMO"/>
</dbReference>
<dbReference type="PANTHER" id="PTHR33353:SF10">
    <property type="entry name" value="ENDO-BETA-1,4-GLUCANASE D"/>
    <property type="match status" value="1"/>
</dbReference>
<dbReference type="PANTHER" id="PTHR33353">
    <property type="entry name" value="PUTATIVE (AFU_ORTHOLOGUE AFUA_1G12560)-RELATED"/>
    <property type="match status" value="1"/>
</dbReference>
<dbReference type="Pfam" id="PF03443">
    <property type="entry name" value="AA9"/>
    <property type="match status" value="1"/>
</dbReference>
<organism>
    <name type="scientific">Thermothielavioides terrestris (strain ATCC 38088 / NRRL 8126)</name>
    <name type="common">Thielavia terrestris</name>
    <dbReference type="NCBI Taxonomy" id="578455"/>
    <lineage>
        <taxon>Eukaryota</taxon>
        <taxon>Fungi</taxon>
        <taxon>Dikarya</taxon>
        <taxon>Ascomycota</taxon>
        <taxon>Pezizomycotina</taxon>
        <taxon>Sordariomycetes</taxon>
        <taxon>Sordariomycetidae</taxon>
        <taxon>Sordariales</taxon>
        <taxon>Chaetomiaceae</taxon>
        <taxon>Thermothielavioides</taxon>
        <taxon>Thermothielavioides terrestris</taxon>
    </lineage>
</organism>
<keyword id="KW-0119">Carbohydrate metabolism</keyword>
<keyword id="KW-0136">Cellulose degradation</keyword>
<keyword id="KW-0186">Copper</keyword>
<keyword id="KW-1015">Disulfide bond</keyword>
<keyword id="KW-0325">Glycoprotein</keyword>
<keyword id="KW-0479">Metal-binding</keyword>
<keyword id="KW-0503">Monooxygenase</keyword>
<keyword id="KW-0560">Oxidoreductase</keyword>
<keyword id="KW-0624">Polysaccharide degradation</keyword>
<keyword id="KW-1185">Reference proteome</keyword>
<keyword id="KW-0964">Secreted</keyword>
<keyword id="KW-0732">Signal</keyword>
<reference key="1">
    <citation type="journal article" date="2011" name="Nat. Biotechnol.">
        <title>Comparative genomic analysis of the thermophilic biomass-degrading fungi Myceliophthora thermophila and Thielavia terrestris.</title>
        <authorList>
            <person name="Berka R.M."/>
            <person name="Grigoriev I.V."/>
            <person name="Otillar R."/>
            <person name="Salamov A."/>
            <person name="Grimwood J."/>
            <person name="Reid I."/>
            <person name="Ishmael N."/>
            <person name="John T."/>
            <person name="Darmond C."/>
            <person name="Moisan M.-C."/>
            <person name="Henrissat B."/>
            <person name="Coutinho P.M."/>
            <person name="Lombard V."/>
            <person name="Natvig D.O."/>
            <person name="Lindquist E."/>
            <person name="Schmutz J."/>
            <person name="Lucas S."/>
            <person name="Harris P."/>
            <person name="Powlowski J."/>
            <person name="Bellemare A."/>
            <person name="Taylor D."/>
            <person name="Butler G."/>
            <person name="de Vries R.P."/>
            <person name="Allijn I.E."/>
            <person name="van den Brink J."/>
            <person name="Ushinsky S."/>
            <person name="Storms R."/>
            <person name="Powell A.J."/>
            <person name="Paulsen I.T."/>
            <person name="Elbourne L.D.H."/>
            <person name="Baker S.E."/>
            <person name="Magnuson J."/>
            <person name="LaBoissiere S."/>
            <person name="Clutterbuck A.J."/>
            <person name="Martinez D."/>
            <person name="Wogulis M."/>
            <person name="de Leon A.L."/>
            <person name="Rey M.W."/>
            <person name="Tsang A."/>
        </authorList>
    </citation>
    <scope>NUCLEOTIDE SEQUENCE [LARGE SCALE GENOMIC DNA]</scope>
    <source>
        <strain>ATCC 38088 / NRRL 8126</strain>
    </source>
</reference>
<reference key="2">
    <citation type="journal article" date="2022" name="Appl. Environ. Microbiol.">
        <title>Comparison of six lytic polysaccharide monooxygenases from Thermothielavioides terrestris shows that functional variation underlies the multiplicity of LPMO genes in filamentous fungi.</title>
        <authorList>
            <person name="Tolgo M."/>
            <person name="Hegnar O.A."/>
            <person name="Oestby H."/>
            <person name="Varnai A."/>
            <person name="Vilaplana F."/>
            <person name="Eijsink V.G.H."/>
            <person name="Olsson L."/>
        </authorList>
    </citation>
    <scope>FUNCTION</scope>
    <scope>CATALYTIC ACTIVITY</scope>
</reference>
<feature type="signal peptide" evidence="5">
    <location>
        <begin position="1"/>
        <end position="17"/>
    </location>
</feature>
<feature type="chain" id="PRO_5003436950" description="AA9 family lytic polysaccharide monooxygenase A">
    <location>
        <begin position="18"/>
        <end position="233"/>
    </location>
</feature>
<feature type="binding site" evidence="10">
    <location>
        <position position="18"/>
    </location>
    <ligand>
        <name>Cu(2+)</name>
        <dbReference type="ChEBI" id="CHEBI:29036"/>
    </ligand>
</feature>
<feature type="binding site" evidence="3">
    <location>
        <position position="90"/>
    </location>
    <ligand>
        <name>Cu(2+)</name>
        <dbReference type="ChEBI" id="CHEBI:29036"/>
    </ligand>
</feature>
<feature type="binding site" evidence="2">
    <location>
        <position position="166"/>
    </location>
    <ligand>
        <name>O2</name>
        <dbReference type="ChEBI" id="CHEBI:15379"/>
    </ligand>
</feature>
<feature type="binding site" evidence="2">
    <location>
        <position position="175"/>
    </location>
    <ligand>
        <name>O2</name>
        <dbReference type="ChEBI" id="CHEBI:15379"/>
    </ligand>
</feature>
<feature type="binding site" evidence="10">
    <location>
        <position position="177"/>
    </location>
    <ligand>
        <name>Cu(2+)</name>
        <dbReference type="ChEBI" id="CHEBI:29036"/>
    </ligand>
</feature>
<feature type="glycosylation site" description="N-linked (GlcNAc...) asparagine" evidence="6">
    <location>
        <position position="132"/>
    </location>
</feature>
<feature type="disulfide bond" evidence="4">
    <location>
        <begin position="59"/>
        <end position="180"/>
    </location>
</feature>
<feature type="disulfide bond" evidence="1">
    <location>
        <begin position="150"/>
        <end position="233"/>
    </location>
</feature>
<sequence>MKLTTSVALLAAAGAQAHYTFPQTDINGQLSGEWVTIRETTNHYSHGPVTDVTSDQIRCYELNPGTPAPQIATVQAGGTVTFTVDPSIQHPGPLQFYMAKAPSGQTAATFQGTGNVWFKIYEDGPSGLGTSNITWPSSGKTEVSVKIPSCIAPGDYLLRVEHIALHSASTVGGAQFYLACAQLTVTGGTGTLNTGELVAFPGAYSATDPGILFQLYWPIPTSYTNPGPAPVSC</sequence>
<protein>
    <recommendedName>
        <fullName evidence="8">AA9 family lytic polysaccharide monooxygenase A</fullName>
        <shortName evidence="8">LPMO9A</shortName>
        <ecNumber evidence="7">1.14.99.56</ecNumber>
    </recommendedName>
    <alternativeName>
        <fullName evidence="9">Endo-1,4-beta-glucanase LPMO9A</fullName>
        <shortName evidence="9">Endoglucanase LPMO9A</shortName>
    </alternativeName>
    <alternativeName>
        <fullName evidence="9">Glycosyl hydrolase 61 family protein LPMO9A</fullName>
    </alternativeName>
</protein>
<comment type="function">
    <text evidence="7">Lytic polysaccharide monooxygenase (LPMO) that depolymerizes crystalline and amorphous polysaccharides via the oxidation of scissile alpha- or beta-(1-4)-glycosidic bonds, yielding C1 and C4 oxidation products (PubMed:35080911). Catalysis by LPMOs requires the reduction of the active-site copper from Cu(II) to Cu(I) by a reducing agent and H(2)O(2) or O(2) as a cosubstrate (PubMed:35080911). Shows endoglucanase activity on tamarind xyloglucan, as well as on beechwood xylan when combined with phosphoric acid swollen cellulose (PASC) (PubMed:35080911). Shows no activity on wheat arabinoxylan, konjac glucomannan, acetylated spruce galactoglucomannan, or cellopentaose (PubMed:35080911).</text>
</comment>
<comment type="catalytic activity">
    <reaction evidence="7">
        <text>[(1-&gt;4)-beta-D-glucosyl]n+m + reduced acceptor + O2 = 4-dehydro-beta-D-glucosyl-[(1-&gt;4)-beta-D-glucosyl]n-1 + [(1-&gt;4)-beta-D-glucosyl]m + acceptor + H2O.</text>
        <dbReference type="EC" id="1.14.99.56"/>
    </reaction>
</comment>
<comment type="cofactor">
    <cofactor evidence="10">
        <name>Cu(2+)</name>
        <dbReference type="ChEBI" id="CHEBI:29036"/>
    </cofactor>
    <text evidence="10">Binds 1 copper ion per subunit.</text>
</comment>
<comment type="subcellular location">
    <subcellularLocation>
        <location evidence="10">Secreted</location>
    </subcellularLocation>
</comment>
<comment type="biotechnology">
    <text evidence="10">Lignocellulose is the most abundant polymeric composite on Earth and is a recalcitrant but promising renewable substrate for industrial biotechnology applications. Together with cellobiose dehydrogenases (CDHs) an enzymatic system capable of oxidative cellulose cleavage is formed, which increases the efficiency of cellulases and put LPMOs at focus of biofuel research.</text>
</comment>
<comment type="similarity">
    <text evidence="9">Belongs to the polysaccharide monooxygenase AA9 family.</text>
</comment>
<accession>G2R6N0</accession>
<name>LP9A_THETT</name>
<proteinExistence type="evidence at protein level"/>
<evidence type="ECO:0000250" key="1">
    <source>
        <dbReference type="UniProtKB" id="Q1K4Q1"/>
    </source>
</evidence>
<evidence type="ECO:0000250" key="2">
    <source>
        <dbReference type="UniProtKB" id="Q1K8B6"/>
    </source>
</evidence>
<evidence type="ECO:0000250" key="3">
    <source>
        <dbReference type="UniProtKB" id="Q4WP32"/>
    </source>
</evidence>
<evidence type="ECO:0000250" key="4">
    <source>
        <dbReference type="UniProtKB" id="Q7Z9M7"/>
    </source>
</evidence>
<evidence type="ECO:0000255" key="5"/>
<evidence type="ECO:0000255" key="6">
    <source>
        <dbReference type="PROSITE-ProRule" id="PRU00498"/>
    </source>
</evidence>
<evidence type="ECO:0000269" key="7">
    <source>
    </source>
</evidence>
<evidence type="ECO:0000303" key="8">
    <source>
    </source>
</evidence>
<evidence type="ECO:0000305" key="9"/>
<evidence type="ECO:0000305" key="10">
    <source>
    </source>
</evidence>